<keyword id="KW-0067">ATP-binding</keyword>
<keyword id="KW-0131">Cell cycle</keyword>
<keyword id="KW-0132">Cell division</keyword>
<keyword id="KW-0997">Cell inner membrane</keyword>
<keyword id="KW-1003">Cell membrane</keyword>
<keyword id="KW-0159">Chromosome partition</keyword>
<keyword id="KW-0238">DNA-binding</keyword>
<keyword id="KW-0472">Membrane</keyword>
<keyword id="KW-0547">Nucleotide-binding</keyword>
<keyword id="KW-1185">Reference proteome</keyword>
<keyword id="KW-0812">Transmembrane</keyword>
<keyword id="KW-1133">Transmembrane helix</keyword>
<sequence>MKKSTPAPSAVPLWRQQLHYRLKEGALIAFGALCLYLMMALLTYDQSDPGWSHTSSNAGQVQNAAGWAGAFCADILFMILGYFAYIFPLLLAIKTWQVFRHRHEPWQWSGWLFSWRLIGLVFLILAGAALAHIHFHFSAGFPGSAGGVLGEVLGDLAKRALNIQGSTLLFIALFLFGLTVFTDLSWFKVMDVTGKITLDLFELFQGAANRWWTARAERKQMVAQLREVDMRVNDVVAPVAPDRREQAKARERIIEREVSLSKHMTEREKHVPAVIAPAPSKPAEPSKRVLKEKQAPLFVDSAVEGTLPPISILDPAEKKQLNYSPESLAAVGHLLEIKLKEFGVEVSVDSIHPGPVITRYEIQPAAGVKVSRISNLAKDLARSLAVTSVRVVEVIPGKTTVGIEIPNEDRQIVRFSEVLSTPEYDNAKSPVTLALGHDIGGKPVITDLAKMPHLLVAGTTGSGKSVGVNAMILSILFKSGPEDAKLIMIDPKMLELSIYEGIPHLLCPVVTDMKDAANALRWSVAEMERRYKLMAKMGVRNLSGFNQKVKEAQDAGEPLADPLYKRESIHDEAPLLTKLPTIVVVVDEFADMMMIVGKKVEELIARIAQKARAAGIHLILATQRPSVDVITGLIKANIPTRMAFQVSSKIDSRTIIDQGGAEQLLGHGDMLYMPPGTSLPIRVHGAFVSDEEVHRVVEAWKLRGSPDYNDDILAGVEEPGSGFDGGSSEGGEDSESDALYDEAVKFVLESRRASISAVQRKLKIGYNRAARMIEAMEMAGVVTSMNTNGSREVLAPGPVRD</sequence>
<name>FTSK_PSESM</name>
<accession>Q87ZS5</accession>
<comment type="function">
    <text evidence="1">Essential cell division protein that coordinates cell division and chromosome segregation. The N-terminus is involved in assembly of the cell-division machinery. The C-terminus functions as a DNA motor that moves dsDNA in an ATP-dependent manner towards the dif recombination site, which is located within the replication terminus region. Translocation stops specifically at Xer-dif sites, where FtsK interacts with the Xer recombinase, allowing activation of chromosome unlinking by recombination. FtsK orienting polar sequences (KOPS) guide the direction of DNA translocation. FtsK can remove proteins from DNA as it translocates, but translocation stops specifically at XerCD-dif site, thereby preventing removal of XerC and XerD from dif (By similarity).</text>
</comment>
<comment type="subunit">
    <text evidence="1">Homohexamer. Forms a ring that surrounds DNA (By similarity).</text>
</comment>
<comment type="subcellular location">
    <subcellularLocation>
        <location evidence="1">Cell inner membrane</location>
        <topology evidence="1">Multi-pass membrane protein</topology>
    </subcellularLocation>
    <text evidence="1">Located at the septum.</text>
</comment>
<comment type="domain">
    <text evidence="1">Consists of an N-terminal domain, which is sufficient for the localization to the septal ring and is required for cell division, followed by a linker domain, and a C-terminal domain, which forms the translocation motor involved in chromosome segregation. The C-terminal domain can be further subdivided into alpha, beta and gamma subdomains. The alpha and beta subdomains multimerise to produce a hexameric ring, contain the nucleotide binding motif and form the DNA pump. The gamma subdomain is a regulatory subdomain that controls translocation of DNA by recognition of KOPS motifs and interacts with XerD recombinase (By similarity).</text>
</comment>
<comment type="similarity">
    <text evidence="5">Belongs to the FtsK/SpoIIIE/SftA family.</text>
</comment>
<protein>
    <recommendedName>
        <fullName>DNA translocase FtsK</fullName>
    </recommendedName>
</protein>
<evidence type="ECO:0000250" key="1"/>
<evidence type="ECO:0000255" key="2"/>
<evidence type="ECO:0000255" key="3">
    <source>
        <dbReference type="PROSITE-ProRule" id="PRU00289"/>
    </source>
</evidence>
<evidence type="ECO:0000256" key="4">
    <source>
        <dbReference type="SAM" id="MobiDB-lite"/>
    </source>
</evidence>
<evidence type="ECO:0000305" key="5"/>
<feature type="chain" id="PRO_0000098280" description="DNA translocase FtsK">
    <location>
        <begin position="1"/>
        <end position="801"/>
    </location>
</feature>
<feature type="transmembrane region" description="Helical" evidence="2">
    <location>
        <begin position="24"/>
        <end position="44"/>
    </location>
</feature>
<feature type="transmembrane region" description="Helical" evidence="2">
    <location>
        <begin position="73"/>
        <end position="93"/>
    </location>
</feature>
<feature type="transmembrane region" description="Helical" evidence="2">
    <location>
        <begin position="117"/>
        <end position="137"/>
    </location>
</feature>
<feature type="transmembrane region" description="Helical" evidence="2">
    <location>
        <begin position="167"/>
        <end position="187"/>
    </location>
</feature>
<feature type="topological domain" description="Cytoplasmic" evidence="2">
    <location>
        <begin position="188"/>
        <end position="801"/>
    </location>
</feature>
<feature type="domain" description="FtsK" evidence="3">
    <location>
        <begin position="441"/>
        <end position="653"/>
    </location>
</feature>
<feature type="region of interest" description="Disordered" evidence="4">
    <location>
        <begin position="715"/>
        <end position="735"/>
    </location>
</feature>
<feature type="binding site" evidence="3">
    <location>
        <begin position="461"/>
        <end position="466"/>
    </location>
    <ligand>
        <name>ATP</name>
        <dbReference type="ChEBI" id="CHEBI:30616"/>
    </ligand>
</feature>
<organism>
    <name type="scientific">Pseudomonas syringae pv. tomato (strain ATCC BAA-871 / DC3000)</name>
    <dbReference type="NCBI Taxonomy" id="223283"/>
    <lineage>
        <taxon>Bacteria</taxon>
        <taxon>Pseudomonadati</taxon>
        <taxon>Pseudomonadota</taxon>
        <taxon>Gammaproteobacteria</taxon>
        <taxon>Pseudomonadales</taxon>
        <taxon>Pseudomonadaceae</taxon>
        <taxon>Pseudomonas</taxon>
    </lineage>
</organism>
<proteinExistence type="inferred from homology"/>
<reference key="1">
    <citation type="journal article" date="2003" name="Proc. Natl. Acad. Sci. U.S.A.">
        <title>The complete genome sequence of the Arabidopsis and tomato pathogen Pseudomonas syringae pv. tomato DC3000.</title>
        <authorList>
            <person name="Buell C.R."/>
            <person name="Joardar V."/>
            <person name="Lindeberg M."/>
            <person name="Selengut J."/>
            <person name="Paulsen I.T."/>
            <person name="Gwinn M.L."/>
            <person name="Dodson R.J."/>
            <person name="DeBoy R.T."/>
            <person name="Durkin A.S."/>
            <person name="Kolonay J.F."/>
            <person name="Madupu R."/>
            <person name="Daugherty S.C."/>
            <person name="Brinkac L.M."/>
            <person name="Beanan M.J."/>
            <person name="Haft D.H."/>
            <person name="Nelson W.C."/>
            <person name="Davidsen T.M."/>
            <person name="Zafar N."/>
            <person name="Zhou L."/>
            <person name="Liu J."/>
            <person name="Yuan Q."/>
            <person name="Khouri H.M."/>
            <person name="Fedorova N.B."/>
            <person name="Tran B."/>
            <person name="Russell D."/>
            <person name="Berry K.J."/>
            <person name="Utterback T.R."/>
            <person name="Van Aken S.E."/>
            <person name="Feldblyum T.V."/>
            <person name="D'Ascenzo M."/>
            <person name="Deng W.-L."/>
            <person name="Ramos A.R."/>
            <person name="Alfano J.R."/>
            <person name="Cartinhour S."/>
            <person name="Chatterjee A.K."/>
            <person name="Delaney T.P."/>
            <person name="Lazarowitz S.G."/>
            <person name="Martin G.B."/>
            <person name="Schneider D.J."/>
            <person name="Tang X."/>
            <person name="Bender C.L."/>
            <person name="White O."/>
            <person name="Fraser C.M."/>
            <person name="Collmer A."/>
        </authorList>
    </citation>
    <scope>NUCLEOTIDE SEQUENCE [LARGE SCALE GENOMIC DNA]</scope>
    <source>
        <strain>ATCC BAA-871 / DC3000</strain>
    </source>
</reference>
<gene>
    <name type="primary">ftsK</name>
    <name type="ordered locus">PSPTO_3349</name>
</gene>
<dbReference type="EMBL" id="AE016853">
    <property type="protein sequence ID" value="AAO56827.1"/>
    <property type="molecule type" value="Genomic_DNA"/>
</dbReference>
<dbReference type="RefSeq" id="NP_793132.1">
    <property type="nucleotide sequence ID" value="NC_004578.1"/>
</dbReference>
<dbReference type="RefSeq" id="WP_010200894.1">
    <property type="nucleotide sequence ID" value="NC_004578.1"/>
</dbReference>
<dbReference type="SMR" id="Q87ZS5"/>
<dbReference type="STRING" id="223283.PSPTO_3349"/>
<dbReference type="GeneID" id="1185008"/>
<dbReference type="KEGG" id="pst:PSPTO_3349"/>
<dbReference type="PATRIC" id="fig|223283.9.peg.3428"/>
<dbReference type="eggNOG" id="COG1674">
    <property type="taxonomic scope" value="Bacteria"/>
</dbReference>
<dbReference type="HOGENOM" id="CLU_001981_9_7_6"/>
<dbReference type="OrthoDB" id="9807790at2"/>
<dbReference type="PhylomeDB" id="Q87ZS5"/>
<dbReference type="Proteomes" id="UP000002515">
    <property type="component" value="Chromosome"/>
</dbReference>
<dbReference type="GO" id="GO:0005886">
    <property type="term" value="C:plasma membrane"/>
    <property type="evidence" value="ECO:0007669"/>
    <property type="project" value="UniProtKB-SubCell"/>
</dbReference>
<dbReference type="GO" id="GO:0005524">
    <property type="term" value="F:ATP binding"/>
    <property type="evidence" value="ECO:0007669"/>
    <property type="project" value="UniProtKB-KW"/>
</dbReference>
<dbReference type="GO" id="GO:0003677">
    <property type="term" value="F:DNA binding"/>
    <property type="evidence" value="ECO:0007669"/>
    <property type="project" value="UniProtKB-KW"/>
</dbReference>
<dbReference type="GO" id="GO:0051301">
    <property type="term" value="P:cell division"/>
    <property type="evidence" value="ECO:0007669"/>
    <property type="project" value="UniProtKB-KW"/>
</dbReference>
<dbReference type="GO" id="GO:0007059">
    <property type="term" value="P:chromosome segregation"/>
    <property type="evidence" value="ECO:0007669"/>
    <property type="project" value="UniProtKB-KW"/>
</dbReference>
<dbReference type="CDD" id="cd01127">
    <property type="entry name" value="TrwB_TraG_TraD_VirD4"/>
    <property type="match status" value="1"/>
</dbReference>
<dbReference type="FunFam" id="3.40.50.300:FF:000209">
    <property type="entry name" value="Cell division protein FtsK"/>
    <property type="match status" value="1"/>
</dbReference>
<dbReference type="FunFam" id="1.10.10.10:FF:000268">
    <property type="entry name" value="DNA translocase FtsK"/>
    <property type="match status" value="1"/>
</dbReference>
<dbReference type="FunFam" id="3.30.980.40:FF:000001">
    <property type="entry name" value="DNA translocase FtsK"/>
    <property type="match status" value="1"/>
</dbReference>
<dbReference type="Gene3D" id="3.30.980.40">
    <property type="match status" value="1"/>
</dbReference>
<dbReference type="Gene3D" id="3.40.50.300">
    <property type="entry name" value="P-loop containing nucleotide triphosphate hydrolases"/>
    <property type="match status" value="1"/>
</dbReference>
<dbReference type="Gene3D" id="1.10.10.10">
    <property type="entry name" value="Winged helix-like DNA-binding domain superfamily/Winged helix DNA-binding domain"/>
    <property type="match status" value="1"/>
</dbReference>
<dbReference type="InterPro" id="IPR050206">
    <property type="entry name" value="FtsK/SpoIIIE/SftA"/>
</dbReference>
<dbReference type="InterPro" id="IPR025199">
    <property type="entry name" value="FtsK_4TM"/>
</dbReference>
<dbReference type="InterPro" id="IPR041027">
    <property type="entry name" value="FtsK_alpha"/>
</dbReference>
<dbReference type="InterPro" id="IPR002543">
    <property type="entry name" value="FtsK_dom"/>
</dbReference>
<dbReference type="InterPro" id="IPR018541">
    <property type="entry name" value="Ftsk_gamma"/>
</dbReference>
<dbReference type="InterPro" id="IPR027417">
    <property type="entry name" value="P-loop_NTPase"/>
</dbReference>
<dbReference type="InterPro" id="IPR036388">
    <property type="entry name" value="WH-like_DNA-bd_sf"/>
</dbReference>
<dbReference type="InterPro" id="IPR036390">
    <property type="entry name" value="WH_DNA-bd_sf"/>
</dbReference>
<dbReference type="PANTHER" id="PTHR22683:SF41">
    <property type="entry name" value="DNA TRANSLOCASE FTSK"/>
    <property type="match status" value="1"/>
</dbReference>
<dbReference type="PANTHER" id="PTHR22683">
    <property type="entry name" value="SPORULATION PROTEIN RELATED"/>
    <property type="match status" value="1"/>
</dbReference>
<dbReference type="Pfam" id="PF13491">
    <property type="entry name" value="FtsK_4TM"/>
    <property type="match status" value="1"/>
</dbReference>
<dbReference type="Pfam" id="PF17854">
    <property type="entry name" value="FtsK_alpha"/>
    <property type="match status" value="1"/>
</dbReference>
<dbReference type="Pfam" id="PF09397">
    <property type="entry name" value="FtsK_gamma"/>
    <property type="match status" value="1"/>
</dbReference>
<dbReference type="Pfam" id="PF01580">
    <property type="entry name" value="FtsK_SpoIIIE"/>
    <property type="match status" value="1"/>
</dbReference>
<dbReference type="SMART" id="SM00843">
    <property type="entry name" value="Ftsk_gamma"/>
    <property type="match status" value="1"/>
</dbReference>
<dbReference type="SUPFAM" id="SSF52540">
    <property type="entry name" value="P-loop containing nucleoside triphosphate hydrolases"/>
    <property type="match status" value="1"/>
</dbReference>
<dbReference type="SUPFAM" id="SSF46785">
    <property type="entry name" value="Winged helix' DNA-binding domain"/>
    <property type="match status" value="1"/>
</dbReference>
<dbReference type="PROSITE" id="PS50901">
    <property type="entry name" value="FTSK"/>
    <property type="match status" value="1"/>
</dbReference>